<organism>
    <name type="scientific">Burkholderia mallei (strain NCTC 10247)</name>
    <dbReference type="NCBI Taxonomy" id="320389"/>
    <lineage>
        <taxon>Bacteria</taxon>
        <taxon>Pseudomonadati</taxon>
        <taxon>Pseudomonadota</taxon>
        <taxon>Betaproteobacteria</taxon>
        <taxon>Burkholderiales</taxon>
        <taxon>Burkholderiaceae</taxon>
        <taxon>Burkholderia</taxon>
        <taxon>pseudomallei group</taxon>
    </lineage>
</organism>
<protein>
    <recommendedName>
        <fullName evidence="1">Nucleotide-binding protein BMA10247_2938</fullName>
    </recommendedName>
</protein>
<reference key="1">
    <citation type="journal article" date="2010" name="Genome Biol. Evol.">
        <title>Continuing evolution of Burkholderia mallei through genome reduction and large-scale rearrangements.</title>
        <authorList>
            <person name="Losada L."/>
            <person name="Ronning C.M."/>
            <person name="DeShazer D."/>
            <person name="Woods D."/>
            <person name="Fedorova N."/>
            <person name="Kim H.S."/>
            <person name="Shabalina S.A."/>
            <person name="Pearson T.R."/>
            <person name="Brinkac L."/>
            <person name="Tan P."/>
            <person name="Nandi T."/>
            <person name="Crabtree J."/>
            <person name="Badger J."/>
            <person name="Beckstrom-Sternberg S."/>
            <person name="Saqib M."/>
            <person name="Schutzer S.E."/>
            <person name="Keim P."/>
            <person name="Nierman W.C."/>
        </authorList>
    </citation>
    <scope>NUCLEOTIDE SEQUENCE [LARGE SCALE GENOMIC DNA]</scope>
    <source>
        <strain>NCTC 10247</strain>
    </source>
</reference>
<comment type="function">
    <text evidence="1">Displays ATPase and GTPase activities.</text>
</comment>
<comment type="similarity">
    <text evidence="1">Belongs to the RapZ-like family.</text>
</comment>
<accession>A3MQC2</accession>
<proteinExistence type="inferred from homology"/>
<evidence type="ECO:0000255" key="1">
    <source>
        <dbReference type="HAMAP-Rule" id="MF_00636"/>
    </source>
</evidence>
<sequence length="297" mass="33176">MRIVLITGISGSGKSVALNALEDAGYYCVDNLPPHVLPELARYLAHEGQNRLAVAIDARSSASLDEMPGLIRALSHEHDVRVLFLNASTQALIQRFSETRRRHPLSGSPSHDADVGLLVSLEEAIERERELVAPLAEFGHQIDTSNLRANVLRTWVKRFIEQKNDDLVLMFESFGFKRGVPLDADFMFDVRALPNPYYDHELRPLTGLDQPVVAFLDALPVVHQMLDDIETFLVKWLPHFREDNRSYLTVAIGCTGGQHRSVFLAETLAARLSRQASVIVRHRDAPVAVDASSRLVT</sequence>
<feature type="chain" id="PRO_1000056809" description="Nucleotide-binding protein BMA10247_2938">
    <location>
        <begin position="1"/>
        <end position="297"/>
    </location>
</feature>
<feature type="binding site" evidence="1">
    <location>
        <begin position="8"/>
        <end position="15"/>
    </location>
    <ligand>
        <name>ATP</name>
        <dbReference type="ChEBI" id="CHEBI:30616"/>
    </ligand>
</feature>
<feature type="binding site" evidence="1">
    <location>
        <begin position="57"/>
        <end position="60"/>
    </location>
    <ligand>
        <name>GTP</name>
        <dbReference type="ChEBI" id="CHEBI:37565"/>
    </ligand>
</feature>
<dbReference type="EMBL" id="CP000548">
    <property type="protein sequence ID" value="ABO05685.1"/>
    <property type="molecule type" value="Genomic_DNA"/>
</dbReference>
<dbReference type="SMR" id="A3MQC2"/>
<dbReference type="KEGG" id="bmaz:BM44_408"/>
<dbReference type="KEGG" id="bmn:BMA10247_2938"/>
<dbReference type="PATRIC" id="fig|320389.8.peg.450"/>
<dbReference type="GO" id="GO:0005524">
    <property type="term" value="F:ATP binding"/>
    <property type="evidence" value="ECO:0007669"/>
    <property type="project" value="UniProtKB-UniRule"/>
</dbReference>
<dbReference type="GO" id="GO:0005525">
    <property type="term" value="F:GTP binding"/>
    <property type="evidence" value="ECO:0007669"/>
    <property type="project" value="UniProtKB-UniRule"/>
</dbReference>
<dbReference type="Gene3D" id="3.40.50.300">
    <property type="entry name" value="P-loop containing nucleotide triphosphate hydrolases"/>
    <property type="match status" value="1"/>
</dbReference>
<dbReference type="HAMAP" id="MF_00636">
    <property type="entry name" value="RapZ_like"/>
    <property type="match status" value="1"/>
</dbReference>
<dbReference type="InterPro" id="IPR027417">
    <property type="entry name" value="P-loop_NTPase"/>
</dbReference>
<dbReference type="InterPro" id="IPR005337">
    <property type="entry name" value="RapZ-like"/>
</dbReference>
<dbReference type="InterPro" id="IPR053930">
    <property type="entry name" value="RapZ-like_N"/>
</dbReference>
<dbReference type="InterPro" id="IPR053931">
    <property type="entry name" value="RapZ_C"/>
</dbReference>
<dbReference type="NCBIfam" id="NF003828">
    <property type="entry name" value="PRK05416.1"/>
    <property type="match status" value="1"/>
</dbReference>
<dbReference type="PANTHER" id="PTHR30448">
    <property type="entry name" value="RNASE ADAPTER PROTEIN RAPZ"/>
    <property type="match status" value="1"/>
</dbReference>
<dbReference type="PANTHER" id="PTHR30448:SF0">
    <property type="entry name" value="RNASE ADAPTER PROTEIN RAPZ"/>
    <property type="match status" value="1"/>
</dbReference>
<dbReference type="Pfam" id="PF22740">
    <property type="entry name" value="PapZ_C"/>
    <property type="match status" value="1"/>
</dbReference>
<dbReference type="Pfam" id="PF03668">
    <property type="entry name" value="RapZ-like_N"/>
    <property type="match status" value="1"/>
</dbReference>
<dbReference type="PIRSF" id="PIRSF005052">
    <property type="entry name" value="P-loopkin"/>
    <property type="match status" value="1"/>
</dbReference>
<dbReference type="SUPFAM" id="SSF52540">
    <property type="entry name" value="P-loop containing nucleoside triphosphate hydrolases"/>
    <property type="match status" value="1"/>
</dbReference>
<gene>
    <name type="ordered locus">BMA10247_2938</name>
</gene>
<name>Y5438_BURM7</name>
<keyword id="KW-0067">ATP-binding</keyword>
<keyword id="KW-0342">GTP-binding</keyword>
<keyword id="KW-0547">Nucleotide-binding</keyword>